<feature type="chain" id="PRO_0000180302" description="Phenolphthiocerol/phthiocerol polyketide synthase subunit B">
    <location>
        <begin position="1"/>
        <end position="1538"/>
    </location>
</feature>
<feature type="domain" description="Ketosynthase family 3 (KS3)" evidence="3">
    <location>
        <begin position="33"/>
        <end position="455"/>
    </location>
</feature>
<feature type="domain" description="Carrier" evidence="2">
    <location>
        <begin position="1423"/>
        <end position="1498"/>
    </location>
</feature>
<feature type="region of interest" description="Acyltransferase" evidence="1">
    <location>
        <begin position="553"/>
        <end position="882"/>
    </location>
</feature>
<feature type="region of interest" description="Beta-ketoacyl reductase" evidence="1">
    <location>
        <begin position="1153"/>
        <end position="1328"/>
    </location>
</feature>
<feature type="active site" description="For beta-ketoacyl synthase activity" evidence="3">
    <location>
        <position position="205"/>
    </location>
</feature>
<feature type="active site" description="For beta-ketoacyl synthase activity" evidence="3">
    <location>
        <position position="340"/>
    </location>
</feature>
<feature type="active site" description="For beta-ketoacyl synthase activity" evidence="3">
    <location>
        <position position="377"/>
    </location>
</feature>
<feature type="active site" description="For malonyltransferase activity" evidence="4">
    <location>
        <position position="649"/>
    </location>
</feature>
<feature type="binding site" evidence="1">
    <location>
        <begin position="1153"/>
        <end position="1196"/>
    </location>
    <ligand>
        <name>NADP(+)</name>
        <dbReference type="ChEBI" id="CHEBI:58349"/>
    </ligand>
</feature>
<feature type="modified residue" description="O-(pantetheine 4'-phosphoryl)serine" evidence="2">
    <location>
        <position position="1458"/>
    </location>
</feature>
<sequence>MMRTAFSRISGMTAQQRTSLADEFDRVSRIAVAEPVAVVGIGCRFPGDVDGPESFWDFLVAGRNAISTVPADRWDAEAFYHPDPLTPGRMTTKWGGFVPDVAGFDAEFFGITPREAAAMDPQQRMLLEVAWEALEHAGIPPDSLGGTRTAVMMGVYFNEYQSMLAASPQNVDAYSGTGNAHSITVGRISYLLGLRGPAVAVDTACSSSLVAVHLACQSLRLRETDLALAGGVSITLRPETQIAISAWGLLSPQGRCAAFDAAADGFVRGEGAGVVVLKRLTDAVRDGDQVLAVVRGSAVNQDGRSNGVTAPNTAAQCDVIADALRSGDVAPDSVNYVEAHGTGTVLGDPIEFEALAATYGHGGDACALGAVKTNIGHLEAAAGIAGFIKATLAVQRATIPPNLHFSQWNPAIDAASTRFFVPTQNSPWPTAEGPRRAAVSSFGLGGTNAHVIIEQGSELAPVSEGGEDTGVSTLVVTGKTAQRMAATAQVLADWMEGPGAEVAVADVAHTVNHHRARQATFGTVVARDRAQAIAGLRALAAGQHAPGVVSHQDGSPGPGTVFVYSGRGSQWAGMGRQLLADEPAFAAAVAELEPVFVEQAGFSLRDVIATGKELVGIEQIQLGLIGMQLTLTELWRSYGVQPDLVIGHSMGEVAAAVVAGALTPAEGLRVTATRARLMAPLSGQGGMALLGLDAAATEALIADYPQVTVGIYNSPRQTVIAGPTEQIDELIARVRAQNRFASRVNIEVAPHNPAMDALQPAMRSELADLTPRTPTIGIISTTYADLHTQPIFDAEHWATNMRNPVRFQQAIASAGSGADGAYHTFIEISAHPLLTQAIADTLEDAHRPTKSAAKYLSIGTLQRDADDTVTFRTNLYTADIAHPPHTCHPPEPHPTIPTTPWQHTHHWIATTHPSTAAPEDPGSNKVVVNGQSTSESRALEDWCHQLAWPIRPAVSADPPSTAAWLVVADNELCHELARAADSRVDSLSPPALAAGSDPAALLDALRGVDNVLYAPPVPGELLDIESAYQVFHATRRLAAAMVASSATAISPPKLFIMTRNAQPISEGDRANPGHAVLWGLGRSLALEHPEIWGGIIDLDDSMPAELAVRHVLTAAHGTDGEDQVVYRSGARHVPRLQRRTLPGKPVTLNADASQLVIGATGNIGPHLIRQLARMGAKTIVAMARKPGALDELTQCLAATGTDLIAVAADATDPAAMQTLFDRFGTELPPLEGIYLAAFAGRPALLSEMTDDDVTTMFRPKLDALALLHRRSLKSPVRHFVLFSSVSGLLGSRWLAHYTATSAFLDSFAGARRTMGLPATVVDWGLWKSLADVQKDATQISAESGLQPMADEVAIGALPLVMNPDAAVATVVVAADWPLLAAAYRTRGALRIVDDLLPAPEDVGKGESEFRTSLRSCPAEKRRDMLFDHVGALAATVMGMPPTEPLDPSAGFFQLGMDSLMSVTLQRALSESLGEFLPASVVFDYPTVYSLTDYLATVLPELLEIGATAVATQQATDSYHELTEAELLEQLSERLRGTQ</sequence>
<gene>
    <name type="primary">ppsB</name>
    <name type="ordered locus">Rv2932</name>
    <name type="ORF">MTCY338.21</name>
    <name type="ORF">MTV011.01</name>
</gene>
<protein>
    <recommendedName>
        <fullName evidence="7">Phenolphthiocerol/phthiocerol polyketide synthase subunit B</fullName>
        <ecNumber evidence="5 8">2.3.1.292</ecNumber>
    </recommendedName>
    <alternativeName>
        <fullName>(Phenol)carboxyphthiodiolenone synthase subunit B</fullName>
    </alternativeName>
    <alternativeName>
        <fullName>Beta-ketoacyl-acyl-carrier-protein synthase I</fullName>
    </alternativeName>
    <alternativeName>
        <fullName>Phthiocerol synthesis polyketide synthase type I PpsB</fullName>
    </alternativeName>
</protein>
<dbReference type="EC" id="2.3.1.292" evidence="5 8"/>
<dbReference type="EMBL" id="AL123456">
    <property type="protein sequence ID" value="CCP45735.1"/>
    <property type="molecule type" value="Genomic_DNA"/>
</dbReference>
<dbReference type="PIR" id="E70874">
    <property type="entry name" value="E70874"/>
</dbReference>
<dbReference type="RefSeq" id="NP_217448.1">
    <property type="nucleotide sequence ID" value="NC_000962.3"/>
</dbReference>
<dbReference type="RefSeq" id="WP_003899547.1">
    <property type="nucleotide sequence ID" value="NZ_NVQJ01000078.1"/>
</dbReference>
<dbReference type="PDB" id="7P49">
    <property type="method" value="X-ray"/>
    <property type="resolution" value="2.05 A"/>
    <property type="chains" value="P/Q/R/Z=483-491"/>
</dbReference>
<dbReference type="PDBsum" id="7P49"/>
<dbReference type="SMR" id="P9WQE5"/>
<dbReference type="FunCoup" id="P9WQE5">
    <property type="interactions" value="18"/>
</dbReference>
<dbReference type="STRING" id="83332.Rv2932"/>
<dbReference type="PaxDb" id="83332-Rv2932"/>
<dbReference type="DNASU" id="888023"/>
<dbReference type="GeneID" id="888023"/>
<dbReference type="KEGG" id="mtu:Rv2932"/>
<dbReference type="KEGG" id="mtv:RVBD_2932"/>
<dbReference type="PATRIC" id="fig|83332.111.peg.3262"/>
<dbReference type="TubercuList" id="Rv2932"/>
<dbReference type="eggNOG" id="COG1020">
    <property type="taxonomic scope" value="Bacteria"/>
</dbReference>
<dbReference type="eggNOG" id="COG1028">
    <property type="taxonomic scope" value="Bacteria"/>
</dbReference>
<dbReference type="eggNOG" id="COG3321">
    <property type="taxonomic scope" value="Bacteria"/>
</dbReference>
<dbReference type="InParanoid" id="P9WQE5"/>
<dbReference type="OrthoDB" id="9778690at2"/>
<dbReference type="PhylomeDB" id="P9WQE5"/>
<dbReference type="UniPathway" id="UPA00094"/>
<dbReference type="Proteomes" id="UP000001584">
    <property type="component" value="Chromosome"/>
</dbReference>
<dbReference type="GO" id="GO:0005737">
    <property type="term" value="C:cytoplasm"/>
    <property type="evidence" value="ECO:0000318"/>
    <property type="project" value="GO_Central"/>
</dbReference>
<dbReference type="GO" id="GO:0034081">
    <property type="term" value="C:polyketide synthase complex"/>
    <property type="evidence" value="ECO:0000250"/>
    <property type="project" value="UniProtKB"/>
</dbReference>
<dbReference type="GO" id="GO:0004315">
    <property type="term" value="F:3-oxoacyl-[acyl-carrier-protein] synthase activity"/>
    <property type="evidence" value="ECO:0000314"/>
    <property type="project" value="MTBBASE"/>
</dbReference>
<dbReference type="GO" id="GO:0004312">
    <property type="term" value="F:fatty acid synthase activity"/>
    <property type="evidence" value="ECO:0000318"/>
    <property type="project" value="GO_Central"/>
</dbReference>
<dbReference type="GO" id="GO:0016491">
    <property type="term" value="F:oxidoreductase activity"/>
    <property type="evidence" value="ECO:0007669"/>
    <property type="project" value="UniProtKB-KW"/>
</dbReference>
<dbReference type="GO" id="GO:0031177">
    <property type="term" value="F:phosphopantetheine binding"/>
    <property type="evidence" value="ECO:0007669"/>
    <property type="project" value="InterPro"/>
</dbReference>
<dbReference type="GO" id="GO:0071770">
    <property type="term" value="P:DIM/DIP cell wall layer assembly"/>
    <property type="evidence" value="ECO:0000314"/>
    <property type="project" value="MTBBASE"/>
</dbReference>
<dbReference type="GO" id="GO:0006633">
    <property type="term" value="P:fatty acid biosynthetic process"/>
    <property type="evidence" value="ECO:0000314"/>
    <property type="project" value="MTBBASE"/>
</dbReference>
<dbReference type="GO" id="GO:0097041">
    <property type="term" value="P:phenolic phthiocerol biosynthetic process"/>
    <property type="evidence" value="ECO:0000250"/>
    <property type="project" value="UniProtKB"/>
</dbReference>
<dbReference type="GO" id="GO:0097040">
    <property type="term" value="P:phthiocerol biosynthetic process"/>
    <property type="evidence" value="ECO:0000250"/>
    <property type="project" value="UniProtKB"/>
</dbReference>
<dbReference type="CDD" id="cd05274">
    <property type="entry name" value="KR_FAS_SDR_x"/>
    <property type="match status" value="1"/>
</dbReference>
<dbReference type="CDD" id="cd00833">
    <property type="entry name" value="PKS"/>
    <property type="match status" value="1"/>
</dbReference>
<dbReference type="FunFam" id="3.30.70.250:FF:000003">
    <property type="entry name" value="Polyketide beta-ketoacyl synthase Pks3"/>
    <property type="match status" value="1"/>
</dbReference>
<dbReference type="FunFam" id="3.40.47.10:FF:000019">
    <property type="entry name" value="Polyketide synthase type I"/>
    <property type="match status" value="1"/>
</dbReference>
<dbReference type="FunFam" id="1.10.1200.10:FF:000007">
    <property type="entry name" value="Probable polyketide synthase pks17"/>
    <property type="match status" value="1"/>
</dbReference>
<dbReference type="Gene3D" id="3.40.47.10">
    <property type="match status" value="1"/>
</dbReference>
<dbReference type="Gene3D" id="1.10.1200.10">
    <property type="entry name" value="ACP-like"/>
    <property type="match status" value="1"/>
</dbReference>
<dbReference type="Gene3D" id="3.30.70.250">
    <property type="entry name" value="Malonyl-CoA ACP transacylase, ACP-binding"/>
    <property type="match status" value="1"/>
</dbReference>
<dbReference type="Gene3D" id="3.40.366.10">
    <property type="entry name" value="Malonyl-Coenzyme A Acyl Carrier Protein, domain 2"/>
    <property type="match status" value="1"/>
</dbReference>
<dbReference type="Gene3D" id="3.40.50.720">
    <property type="entry name" value="NAD(P)-binding Rossmann-like Domain"/>
    <property type="match status" value="1"/>
</dbReference>
<dbReference type="InterPro" id="IPR001227">
    <property type="entry name" value="Ac_transferase_dom_sf"/>
</dbReference>
<dbReference type="InterPro" id="IPR036736">
    <property type="entry name" value="ACP-like_sf"/>
</dbReference>
<dbReference type="InterPro" id="IPR014043">
    <property type="entry name" value="Acyl_transferase_dom"/>
</dbReference>
<dbReference type="InterPro" id="IPR016035">
    <property type="entry name" value="Acyl_Trfase/lysoPLipase"/>
</dbReference>
<dbReference type="InterPro" id="IPR018201">
    <property type="entry name" value="Ketoacyl_synth_AS"/>
</dbReference>
<dbReference type="InterPro" id="IPR014031">
    <property type="entry name" value="Ketoacyl_synth_C"/>
</dbReference>
<dbReference type="InterPro" id="IPR014030">
    <property type="entry name" value="Ketoacyl_synth_N"/>
</dbReference>
<dbReference type="InterPro" id="IPR016036">
    <property type="entry name" value="Malonyl_transacylase_ACP-bd"/>
</dbReference>
<dbReference type="InterPro" id="IPR036291">
    <property type="entry name" value="NAD(P)-bd_dom_sf"/>
</dbReference>
<dbReference type="InterPro" id="IPR032821">
    <property type="entry name" value="PKS_assoc"/>
</dbReference>
<dbReference type="InterPro" id="IPR020841">
    <property type="entry name" value="PKS_Beta-ketoAc_synthase_dom"/>
</dbReference>
<dbReference type="InterPro" id="IPR013968">
    <property type="entry name" value="PKS_KR"/>
</dbReference>
<dbReference type="InterPro" id="IPR050091">
    <property type="entry name" value="PKS_NRPS_Biosynth_Enz"/>
</dbReference>
<dbReference type="InterPro" id="IPR020806">
    <property type="entry name" value="PKS_PP-bd"/>
</dbReference>
<dbReference type="InterPro" id="IPR009081">
    <property type="entry name" value="PP-bd_ACP"/>
</dbReference>
<dbReference type="InterPro" id="IPR016039">
    <property type="entry name" value="Thiolase-like"/>
</dbReference>
<dbReference type="PANTHER" id="PTHR43775">
    <property type="entry name" value="FATTY ACID SYNTHASE"/>
    <property type="match status" value="1"/>
</dbReference>
<dbReference type="PANTHER" id="PTHR43775:SF37">
    <property type="entry name" value="SI:DKEY-61P9.11"/>
    <property type="match status" value="1"/>
</dbReference>
<dbReference type="Pfam" id="PF00698">
    <property type="entry name" value="Acyl_transf_1"/>
    <property type="match status" value="1"/>
</dbReference>
<dbReference type="Pfam" id="PF16197">
    <property type="entry name" value="KAsynt_C_assoc"/>
    <property type="match status" value="1"/>
</dbReference>
<dbReference type="Pfam" id="PF00109">
    <property type="entry name" value="ketoacyl-synt"/>
    <property type="match status" value="1"/>
</dbReference>
<dbReference type="Pfam" id="PF02801">
    <property type="entry name" value="Ketoacyl-synt_C"/>
    <property type="match status" value="1"/>
</dbReference>
<dbReference type="Pfam" id="PF08659">
    <property type="entry name" value="KR"/>
    <property type="match status" value="1"/>
</dbReference>
<dbReference type="Pfam" id="PF00550">
    <property type="entry name" value="PP-binding"/>
    <property type="match status" value="1"/>
</dbReference>
<dbReference type="SMART" id="SM00827">
    <property type="entry name" value="PKS_AT"/>
    <property type="match status" value="1"/>
</dbReference>
<dbReference type="SMART" id="SM00822">
    <property type="entry name" value="PKS_KR"/>
    <property type="match status" value="1"/>
</dbReference>
<dbReference type="SMART" id="SM00825">
    <property type="entry name" value="PKS_KS"/>
    <property type="match status" value="1"/>
</dbReference>
<dbReference type="SMART" id="SM00823">
    <property type="entry name" value="PKS_PP"/>
    <property type="match status" value="1"/>
</dbReference>
<dbReference type="SMART" id="SM01294">
    <property type="entry name" value="PKS_PP_betabranch"/>
    <property type="match status" value="1"/>
</dbReference>
<dbReference type="SUPFAM" id="SSF47336">
    <property type="entry name" value="ACP-like"/>
    <property type="match status" value="1"/>
</dbReference>
<dbReference type="SUPFAM" id="SSF52151">
    <property type="entry name" value="FabD/lysophospholipase-like"/>
    <property type="match status" value="1"/>
</dbReference>
<dbReference type="SUPFAM" id="SSF51735">
    <property type="entry name" value="NAD(P)-binding Rossmann-fold domains"/>
    <property type="match status" value="2"/>
</dbReference>
<dbReference type="SUPFAM" id="SSF55048">
    <property type="entry name" value="Probable ACP-binding domain of malonyl-CoA ACP transacylase"/>
    <property type="match status" value="1"/>
</dbReference>
<dbReference type="SUPFAM" id="SSF53901">
    <property type="entry name" value="Thiolase-like"/>
    <property type="match status" value="1"/>
</dbReference>
<dbReference type="PROSITE" id="PS50075">
    <property type="entry name" value="CARRIER"/>
    <property type="match status" value="1"/>
</dbReference>
<dbReference type="PROSITE" id="PS00606">
    <property type="entry name" value="KS3_1"/>
    <property type="match status" value="1"/>
</dbReference>
<dbReference type="PROSITE" id="PS52004">
    <property type="entry name" value="KS3_2"/>
    <property type="match status" value="1"/>
</dbReference>
<accession>P9WQE5</accession>
<accession>L0TB25</accession>
<accession>O53234</accession>
<accession>Q10978</accession>
<organism>
    <name type="scientific">Mycobacterium tuberculosis (strain ATCC 25618 / H37Rv)</name>
    <dbReference type="NCBI Taxonomy" id="83332"/>
    <lineage>
        <taxon>Bacteria</taxon>
        <taxon>Bacillati</taxon>
        <taxon>Actinomycetota</taxon>
        <taxon>Actinomycetes</taxon>
        <taxon>Mycobacteriales</taxon>
        <taxon>Mycobacteriaceae</taxon>
        <taxon>Mycobacterium</taxon>
        <taxon>Mycobacterium tuberculosis complex</taxon>
    </lineage>
</organism>
<comment type="function">
    <text evidence="5 6">Part of the PpsABCDE complex involved in the biosynthesis of the lipid core common to phthiocerols and phenolphthiocerols by successive additions of malonyl-CoA or methylmalonyl-CoA extender units (PubMed:15749014, PubMed:20553505). PpsA can accept as substrate the activated forms of either icosanoyl (C20), docosanoyl (C22) or lignoceroyl (C24) groups from FadD26, or a (4-hydroxyphenyl)-C17 or (4-hydroxyphenyl)-C19 fatty acyl from FadD29 (PubMed:15749014, PubMed:20553505). PpsA initiates the biosynthesis and extends its substrate using a malonyl-CoA extender unit. The PpsB and PpsC proteins add the second and third malonyl-CoA extender units. PpsD adds an (R)-methylmalonyl unit and PpsE adds a second (R)-methylmalonyl unit. The incorporation of the methylmalonyl units results in formation of two branched methyl groups in the elongated product (PubMed:15749014).</text>
</comment>
<comment type="catalytic activity">
    <reaction evidence="5 8">
        <text>icosanoyl-[(phenol)carboxyphthiodiolenone synthase] + 2 (S)-methylmalonyl-CoA + 3 malonyl-CoA + 5 NADPH + 10 H(+) = C32-carboxyphthiodiolenone-[(phenol)carboxyphthiodiolenone synthase] + 5 CO2 + 5 NADP(+) + 5 CoA + 2 H2O</text>
        <dbReference type="Rhea" id="RHEA:57748"/>
        <dbReference type="Rhea" id="RHEA-COMP:14985"/>
        <dbReference type="Rhea" id="RHEA-COMP:14986"/>
        <dbReference type="ChEBI" id="CHEBI:15377"/>
        <dbReference type="ChEBI" id="CHEBI:15378"/>
        <dbReference type="ChEBI" id="CHEBI:16526"/>
        <dbReference type="ChEBI" id="CHEBI:57287"/>
        <dbReference type="ChEBI" id="CHEBI:57327"/>
        <dbReference type="ChEBI" id="CHEBI:57384"/>
        <dbReference type="ChEBI" id="CHEBI:57783"/>
        <dbReference type="ChEBI" id="CHEBI:58349"/>
        <dbReference type="ChEBI" id="CHEBI:87848"/>
        <dbReference type="ChEBI" id="CHEBI:142236"/>
        <dbReference type="EC" id="2.3.1.292"/>
    </reaction>
</comment>
<comment type="catalytic activity">
    <reaction evidence="5 8">
        <text>docosanoyl-[(phenol)carboxyphthiodiolenone synthase] + 2 (S)-methylmalonyl-CoA + 3 malonyl-CoA + 5 NADPH + 10 H(+) = C34-carboxyphthiodiolenone-[(phenol)carboxyphthiodiolenone synthase] + 5 CO2 + 5 NADP(+) + 5 CoA + 2 H2O</text>
        <dbReference type="Rhea" id="RHEA:57752"/>
        <dbReference type="Rhea" id="RHEA-COMP:14987"/>
        <dbReference type="Rhea" id="RHEA-COMP:14988"/>
        <dbReference type="ChEBI" id="CHEBI:15377"/>
        <dbReference type="ChEBI" id="CHEBI:15378"/>
        <dbReference type="ChEBI" id="CHEBI:16526"/>
        <dbReference type="ChEBI" id="CHEBI:57287"/>
        <dbReference type="ChEBI" id="CHEBI:57327"/>
        <dbReference type="ChEBI" id="CHEBI:57384"/>
        <dbReference type="ChEBI" id="CHEBI:57783"/>
        <dbReference type="ChEBI" id="CHEBI:58349"/>
        <dbReference type="ChEBI" id="CHEBI:142237"/>
        <dbReference type="ChEBI" id="CHEBI:142238"/>
        <dbReference type="EC" id="2.3.1.292"/>
    </reaction>
</comment>
<comment type="catalytic activity">
    <reaction evidence="5 8">
        <text>17-(4-hydroxyphenyl)heptadecanoyl-[(phenol)carboxyphthiodiolenone synthase] + 2 (S)-methylmalonyl-CoA + 3 malonyl-CoA + 5 NADPH + 10 H(+) = C35-(phenol)carboxyphthiodiolenone-[(phenol)carboxyphthiodiolenone synthase] + 5 CO2 + 5 NADP(+) + 5 CoA + 2 H2O</text>
        <dbReference type="Rhea" id="RHEA:57756"/>
        <dbReference type="Rhea" id="RHEA-COMP:14272"/>
        <dbReference type="Rhea" id="RHEA-COMP:14989"/>
        <dbReference type="ChEBI" id="CHEBI:15377"/>
        <dbReference type="ChEBI" id="CHEBI:15378"/>
        <dbReference type="ChEBI" id="CHEBI:16526"/>
        <dbReference type="ChEBI" id="CHEBI:57287"/>
        <dbReference type="ChEBI" id="CHEBI:57327"/>
        <dbReference type="ChEBI" id="CHEBI:57384"/>
        <dbReference type="ChEBI" id="CHEBI:57783"/>
        <dbReference type="ChEBI" id="CHEBI:58349"/>
        <dbReference type="ChEBI" id="CHEBI:133300"/>
        <dbReference type="ChEBI" id="CHEBI:142259"/>
        <dbReference type="EC" id="2.3.1.292"/>
    </reaction>
</comment>
<comment type="catalytic activity">
    <reaction evidence="5 8">
        <text>19-(4-hydroxyphenyl)nonadecanoyl-[(phenol)carboxyphthiodiolenone synthase] + 2 (S)-methylmalonyl-CoA + 3 malonyl-CoA + 5 NADPH + 10 H(+) = C37-(phenol)carboxyphthiodiolenone-[(phenol)carboxyphthiodiolenone synthase] + 5 CO2 + 5 NADP(+) + 5 CoA + 2 H2O</text>
        <dbReference type="Rhea" id="RHEA:57760"/>
        <dbReference type="Rhea" id="RHEA-COMP:14273"/>
        <dbReference type="Rhea" id="RHEA-COMP:14990"/>
        <dbReference type="ChEBI" id="CHEBI:15377"/>
        <dbReference type="ChEBI" id="CHEBI:15378"/>
        <dbReference type="ChEBI" id="CHEBI:16526"/>
        <dbReference type="ChEBI" id="CHEBI:57287"/>
        <dbReference type="ChEBI" id="CHEBI:57327"/>
        <dbReference type="ChEBI" id="CHEBI:57384"/>
        <dbReference type="ChEBI" id="CHEBI:57783"/>
        <dbReference type="ChEBI" id="CHEBI:58349"/>
        <dbReference type="ChEBI" id="CHEBI:133301"/>
        <dbReference type="ChEBI" id="CHEBI:142260"/>
        <dbReference type="EC" id="2.3.1.292"/>
    </reaction>
</comment>
<comment type="cofactor">
    <cofactor evidence="5">
        <name>NADP(+)</name>
        <dbReference type="ChEBI" id="CHEBI:58349"/>
    </cofactor>
</comment>
<comment type="cofactor">
    <cofactor evidence="1">
        <name>pantetheine 4'-phosphate</name>
        <dbReference type="ChEBI" id="CHEBI:47942"/>
    </cofactor>
    <text evidence="1">Binds 1 phosphopantetheine covalently.</text>
</comment>
<comment type="pathway">
    <text evidence="5">Lipid metabolism; fatty acid biosynthesis.</text>
</comment>
<reference key="1">
    <citation type="journal article" date="1998" name="Nature">
        <title>Deciphering the biology of Mycobacterium tuberculosis from the complete genome sequence.</title>
        <authorList>
            <person name="Cole S.T."/>
            <person name="Brosch R."/>
            <person name="Parkhill J."/>
            <person name="Garnier T."/>
            <person name="Churcher C.M."/>
            <person name="Harris D.E."/>
            <person name="Gordon S.V."/>
            <person name="Eiglmeier K."/>
            <person name="Gas S."/>
            <person name="Barry C.E. III"/>
            <person name="Tekaia F."/>
            <person name="Badcock K."/>
            <person name="Basham D."/>
            <person name="Brown D."/>
            <person name="Chillingworth T."/>
            <person name="Connor R."/>
            <person name="Davies R.M."/>
            <person name="Devlin K."/>
            <person name="Feltwell T."/>
            <person name="Gentles S."/>
            <person name="Hamlin N."/>
            <person name="Holroyd S."/>
            <person name="Hornsby T."/>
            <person name="Jagels K."/>
            <person name="Krogh A."/>
            <person name="McLean J."/>
            <person name="Moule S."/>
            <person name="Murphy L.D."/>
            <person name="Oliver S."/>
            <person name="Osborne J."/>
            <person name="Quail M.A."/>
            <person name="Rajandream M.A."/>
            <person name="Rogers J."/>
            <person name="Rutter S."/>
            <person name="Seeger K."/>
            <person name="Skelton S."/>
            <person name="Squares S."/>
            <person name="Squares R."/>
            <person name="Sulston J.E."/>
            <person name="Taylor K."/>
            <person name="Whitehead S."/>
            <person name="Barrell B.G."/>
        </authorList>
    </citation>
    <scope>NUCLEOTIDE SEQUENCE [LARGE SCALE GENOMIC DNA]</scope>
    <source>
        <strain>ATCC 25618 / H37Rv</strain>
    </source>
</reference>
<reference key="2">
    <citation type="journal article" date="2005" name="Mol. Cell">
        <title>Dissecting the mechanism and assembly of a complex virulence mycobacterial lipid.</title>
        <authorList>
            <person name="Trivedi O.A."/>
            <person name="Arora P."/>
            <person name="Vats A."/>
            <person name="Ansari M.Z."/>
            <person name="Tickoo R."/>
            <person name="Sridharan V."/>
            <person name="Mohanty D."/>
            <person name="Gokhale R.S."/>
        </authorList>
    </citation>
    <scope>FUNCTION</scope>
    <scope>CATALYTIC ACTIVITY</scope>
    <scope>COFACTOR</scope>
    <scope>PATHWAY</scope>
</reference>
<reference key="3">
    <citation type="journal article" date="2010" name="FEBS J.">
        <title>Delineation of the roles of FadD22, FadD26 and FadD29 in the biosynthesis of phthiocerol dimycocerosates and related compounds in Mycobacterium tuberculosis.</title>
        <authorList>
            <person name="Simeone R."/>
            <person name="Leger M."/>
            <person name="Constant P."/>
            <person name="Malaga W."/>
            <person name="Marrakchi H."/>
            <person name="Daffe M."/>
            <person name="Guilhot C."/>
            <person name="Chalut C."/>
        </authorList>
    </citation>
    <scope>FUNCTION</scope>
    <scope>CATALYTIC ACTIVITY</scope>
</reference>
<reference key="4">
    <citation type="journal article" date="2011" name="Mol. Cell. Proteomics">
        <title>Proteogenomic analysis of Mycobacterium tuberculosis by high resolution mass spectrometry.</title>
        <authorList>
            <person name="Kelkar D.S."/>
            <person name="Kumar D."/>
            <person name="Kumar P."/>
            <person name="Balakrishnan L."/>
            <person name="Muthusamy B."/>
            <person name="Yadav A.K."/>
            <person name="Shrivastava P."/>
            <person name="Marimuthu A."/>
            <person name="Anand S."/>
            <person name="Sundaram H."/>
            <person name="Kingsbury R."/>
            <person name="Harsha H.C."/>
            <person name="Nair B."/>
            <person name="Prasad T.S."/>
            <person name="Chauhan D.S."/>
            <person name="Katoch K."/>
            <person name="Katoch V.M."/>
            <person name="Kumar P."/>
            <person name="Chaerkady R."/>
            <person name="Ramachandran S."/>
            <person name="Dash D."/>
            <person name="Pandey A."/>
        </authorList>
    </citation>
    <scope>IDENTIFICATION BY MASS SPECTROMETRY [LARGE SCALE ANALYSIS]</scope>
    <source>
        <strain>ATCC 25618 / H37Rv</strain>
    </source>
</reference>
<proteinExistence type="evidence at protein level"/>
<keyword id="KW-0002">3D-structure</keyword>
<keyword id="KW-0276">Fatty acid metabolism</keyword>
<keyword id="KW-0443">Lipid metabolism</keyword>
<keyword id="KW-0511">Multifunctional enzyme</keyword>
<keyword id="KW-0521">NADP</keyword>
<keyword id="KW-0560">Oxidoreductase</keyword>
<keyword id="KW-0596">Phosphopantetheine</keyword>
<keyword id="KW-0597">Phosphoprotein</keyword>
<keyword id="KW-1185">Reference proteome</keyword>
<keyword id="KW-0808">Transferase</keyword>
<evidence type="ECO:0000250" key="1"/>
<evidence type="ECO:0000255" key="2">
    <source>
        <dbReference type="PROSITE-ProRule" id="PRU00258"/>
    </source>
</evidence>
<evidence type="ECO:0000255" key="3">
    <source>
        <dbReference type="PROSITE-ProRule" id="PRU01348"/>
    </source>
</evidence>
<evidence type="ECO:0000255" key="4">
    <source>
        <dbReference type="PROSITE-ProRule" id="PRU10022"/>
    </source>
</evidence>
<evidence type="ECO:0000269" key="5">
    <source>
    </source>
</evidence>
<evidence type="ECO:0000269" key="6">
    <source>
    </source>
</evidence>
<evidence type="ECO:0000305" key="7"/>
<evidence type="ECO:0000305" key="8">
    <source>
    </source>
</evidence>
<name>PPSB_MYCTU</name>